<organism>
    <name type="scientific">Salmonella paratyphi A (strain ATCC 9150 / SARB42)</name>
    <dbReference type="NCBI Taxonomy" id="295319"/>
    <lineage>
        <taxon>Bacteria</taxon>
        <taxon>Pseudomonadati</taxon>
        <taxon>Pseudomonadota</taxon>
        <taxon>Gammaproteobacteria</taxon>
        <taxon>Enterobacterales</taxon>
        <taxon>Enterobacteriaceae</taxon>
        <taxon>Salmonella</taxon>
    </lineage>
</organism>
<name>CYOE_SALPA</name>
<evidence type="ECO:0000255" key="1">
    <source>
        <dbReference type="HAMAP-Rule" id="MF_00154"/>
    </source>
</evidence>
<gene>
    <name evidence="1" type="primary">cyoE</name>
    <name type="ordered locus">SPA2283</name>
</gene>
<keyword id="KW-0997">Cell inner membrane</keyword>
<keyword id="KW-1003">Cell membrane</keyword>
<keyword id="KW-0350">Heme biosynthesis</keyword>
<keyword id="KW-0472">Membrane</keyword>
<keyword id="KW-0808">Transferase</keyword>
<keyword id="KW-0812">Transmembrane</keyword>
<keyword id="KW-1133">Transmembrane helix</keyword>
<proteinExistence type="inferred from homology"/>
<accession>Q5PFP5</accession>
<comment type="function">
    <text evidence="1">Converts heme B (protoheme IX) to heme O by substitution of the vinyl group on carbon 2 of heme B porphyrin ring with a hydroxyethyl farnesyl side group.</text>
</comment>
<comment type="catalytic activity">
    <reaction evidence="1">
        <text>heme b + (2E,6E)-farnesyl diphosphate + H2O = Fe(II)-heme o + diphosphate</text>
        <dbReference type="Rhea" id="RHEA:28070"/>
        <dbReference type="ChEBI" id="CHEBI:15377"/>
        <dbReference type="ChEBI" id="CHEBI:33019"/>
        <dbReference type="ChEBI" id="CHEBI:60344"/>
        <dbReference type="ChEBI" id="CHEBI:60530"/>
        <dbReference type="ChEBI" id="CHEBI:175763"/>
        <dbReference type="EC" id="2.5.1.141"/>
    </reaction>
</comment>
<comment type="pathway">
    <text evidence="1">Porphyrin-containing compound metabolism; heme O biosynthesis; heme O from protoheme: step 1/1.</text>
</comment>
<comment type="subcellular location">
    <subcellularLocation>
        <location evidence="1">Cell inner membrane</location>
        <topology evidence="1">Multi-pass membrane protein</topology>
    </subcellularLocation>
</comment>
<comment type="miscellaneous">
    <text evidence="1">Carbon 2 of the heme B porphyrin ring is defined according to the Fischer nomenclature.</text>
</comment>
<comment type="similarity">
    <text evidence="1">Belongs to the UbiA prenyltransferase family. Protoheme IX farnesyltransferase subfamily.</text>
</comment>
<dbReference type="EC" id="2.5.1.141" evidence="1"/>
<dbReference type="EMBL" id="CP000026">
    <property type="protein sequence ID" value="AAV78168.1"/>
    <property type="molecule type" value="Genomic_DNA"/>
</dbReference>
<dbReference type="RefSeq" id="WP_000971352.1">
    <property type="nucleotide sequence ID" value="NC_006511.1"/>
</dbReference>
<dbReference type="SMR" id="Q5PFP5"/>
<dbReference type="KEGG" id="spt:SPA2283"/>
<dbReference type="HOGENOM" id="CLU_029631_0_0_6"/>
<dbReference type="UniPathway" id="UPA00834">
    <property type="reaction ID" value="UER00712"/>
</dbReference>
<dbReference type="Proteomes" id="UP000008185">
    <property type="component" value="Chromosome"/>
</dbReference>
<dbReference type="GO" id="GO:0005886">
    <property type="term" value="C:plasma membrane"/>
    <property type="evidence" value="ECO:0007669"/>
    <property type="project" value="UniProtKB-SubCell"/>
</dbReference>
<dbReference type="GO" id="GO:0008495">
    <property type="term" value="F:protoheme IX farnesyltransferase activity"/>
    <property type="evidence" value="ECO:0007669"/>
    <property type="project" value="UniProtKB-UniRule"/>
</dbReference>
<dbReference type="GO" id="GO:0048034">
    <property type="term" value="P:heme O biosynthetic process"/>
    <property type="evidence" value="ECO:0007669"/>
    <property type="project" value="UniProtKB-UniRule"/>
</dbReference>
<dbReference type="CDD" id="cd13957">
    <property type="entry name" value="PT_UbiA_Cox10"/>
    <property type="match status" value="1"/>
</dbReference>
<dbReference type="FunFam" id="1.10.357.140:FF:000001">
    <property type="entry name" value="Protoheme IX farnesyltransferase"/>
    <property type="match status" value="1"/>
</dbReference>
<dbReference type="Gene3D" id="1.10.357.140">
    <property type="entry name" value="UbiA prenyltransferase"/>
    <property type="match status" value="1"/>
</dbReference>
<dbReference type="HAMAP" id="MF_00154">
    <property type="entry name" value="CyoE_CtaB"/>
    <property type="match status" value="1"/>
</dbReference>
<dbReference type="InterPro" id="IPR006369">
    <property type="entry name" value="Protohaem_IX_farnesylTrfase"/>
</dbReference>
<dbReference type="InterPro" id="IPR000537">
    <property type="entry name" value="UbiA_prenyltransferase"/>
</dbReference>
<dbReference type="InterPro" id="IPR030470">
    <property type="entry name" value="UbiA_prenylTrfase_CS"/>
</dbReference>
<dbReference type="InterPro" id="IPR044878">
    <property type="entry name" value="UbiA_sf"/>
</dbReference>
<dbReference type="NCBIfam" id="TIGR01473">
    <property type="entry name" value="cyoE_ctaB"/>
    <property type="match status" value="1"/>
</dbReference>
<dbReference type="NCBIfam" id="NF003348">
    <property type="entry name" value="PRK04375.1-1"/>
    <property type="match status" value="1"/>
</dbReference>
<dbReference type="PANTHER" id="PTHR43448">
    <property type="entry name" value="PROTOHEME IX FARNESYLTRANSFERASE, MITOCHONDRIAL"/>
    <property type="match status" value="1"/>
</dbReference>
<dbReference type="PANTHER" id="PTHR43448:SF2">
    <property type="entry name" value="PROTOHEME IX FARNESYLTRANSFERASE, MITOCHONDRIAL"/>
    <property type="match status" value="1"/>
</dbReference>
<dbReference type="Pfam" id="PF01040">
    <property type="entry name" value="UbiA"/>
    <property type="match status" value="1"/>
</dbReference>
<dbReference type="SUPFAM" id="SSF82866">
    <property type="entry name" value="Multidrug efflux transporter AcrB transmembrane domain"/>
    <property type="match status" value="1"/>
</dbReference>
<dbReference type="PROSITE" id="PS00943">
    <property type="entry name" value="UBIA"/>
    <property type="match status" value="1"/>
</dbReference>
<sequence>MMFKQYLQVTKPGIIFGNLISVIGGFLLASKGSIDYPLFIYTLVGVSLVVASGCVFNNYIDRDIDRKMERTKNRVLVKGLISPGVSLVYATLLGIAGFMLLWFGANPLACWLGVMGFVVYVGVYSLYMKRHSVYGTLIGSLSGAAPPVIGYCAVTGDFDSGAAILLAIFSLWQMPHSYAIAIFRFKDYQAANIPVLPVVKGISVAKNHITLYIIAFAVATLMLTLGGYAGYKYLVVAAAVSVWWLGMALRGYKVEDDKVWARKLFGFSIIAITALSIMMSVDFMVPNSQNLLTYVW</sequence>
<protein>
    <recommendedName>
        <fullName evidence="1">Protoheme IX farnesyltransferase</fullName>
        <ecNumber evidence="1">2.5.1.141</ecNumber>
    </recommendedName>
    <alternativeName>
        <fullName evidence="1">Heme B farnesyltransferase</fullName>
    </alternativeName>
    <alternativeName>
        <fullName evidence="1">Heme O synthase</fullName>
    </alternativeName>
</protein>
<reference key="1">
    <citation type="journal article" date="2004" name="Nat. Genet.">
        <title>Comparison of genome degradation in Paratyphi A and Typhi, human-restricted serovars of Salmonella enterica that cause typhoid.</title>
        <authorList>
            <person name="McClelland M."/>
            <person name="Sanderson K.E."/>
            <person name="Clifton S.W."/>
            <person name="Latreille P."/>
            <person name="Porwollik S."/>
            <person name="Sabo A."/>
            <person name="Meyer R."/>
            <person name="Bieri T."/>
            <person name="Ozersky P."/>
            <person name="McLellan M."/>
            <person name="Harkins C.R."/>
            <person name="Wang C."/>
            <person name="Nguyen C."/>
            <person name="Berghoff A."/>
            <person name="Elliott G."/>
            <person name="Kohlberg S."/>
            <person name="Strong C."/>
            <person name="Du F."/>
            <person name="Carter J."/>
            <person name="Kremizki C."/>
            <person name="Layman D."/>
            <person name="Leonard S."/>
            <person name="Sun H."/>
            <person name="Fulton L."/>
            <person name="Nash W."/>
            <person name="Miner T."/>
            <person name="Minx P."/>
            <person name="Delehaunty K."/>
            <person name="Fronick C."/>
            <person name="Magrini V."/>
            <person name="Nhan M."/>
            <person name="Warren W."/>
            <person name="Florea L."/>
            <person name="Spieth J."/>
            <person name="Wilson R.K."/>
        </authorList>
    </citation>
    <scope>NUCLEOTIDE SEQUENCE [LARGE SCALE GENOMIC DNA]</scope>
    <source>
        <strain>ATCC 9150 / SARB42</strain>
    </source>
</reference>
<feature type="chain" id="PRO_0000326937" description="Protoheme IX farnesyltransferase">
    <location>
        <begin position="1"/>
        <end position="296"/>
    </location>
</feature>
<feature type="topological domain" description="Cytoplasmic" evidence="1">
    <location>
        <begin position="1"/>
        <end position="9"/>
    </location>
</feature>
<feature type="transmembrane region" description="Helical" evidence="1">
    <location>
        <begin position="10"/>
        <end position="28"/>
    </location>
</feature>
<feature type="topological domain" description="Periplasmic" evidence="1">
    <location>
        <begin position="29"/>
        <end position="37"/>
    </location>
</feature>
<feature type="transmembrane region" description="Helical" evidence="1">
    <location>
        <begin position="38"/>
        <end position="56"/>
    </location>
</feature>
<feature type="topological domain" description="Cytoplasmic" evidence="1">
    <location>
        <begin position="57"/>
        <end position="78"/>
    </location>
</feature>
<feature type="transmembrane region" description="Helical" evidence="1">
    <location>
        <begin position="79"/>
        <end position="97"/>
    </location>
</feature>
<feature type="topological domain" description="Periplasmic" evidence="1">
    <location>
        <begin position="98"/>
        <end position="107"/>
    </location>
</feature>
<feature type="transmembrane region" description="Helical" evidence="1">
    <location>
        <begin position="108"/>
        <end position="126"/>
    </location>
</feature>
<feature type="topological domain" description="Cytoplasmic" evidence="1">
    <location>
        <begin position="127"/>
        <end position="197"/>
    </location>
</feature>
<feature type="transmembrane region" description="Helical" evidence="1">
    <location>
        <begin position="198"/>
        <end position="216"/>
    </location>
</feature>
<feature type="topological domain" description="Periplasmic" evidence="1">
    <location>
        <begin position="217"/>
        <end position="228"/>
    </location>
</feature>
<feature type="transmembrane region" description="Helical" evidence="1">
    <location>
        <begin position="229"/>
        <end position="247"/>
    </location>
</feature>
<feature type="topological domain" description="Cytoplasmic" evidence="1">
    <location>
        <begin position="248"/>
        <end position="268"/>
    </location>
</feature>
<feature type="transmembrane region" description="Helical" evidence="1">
    <location>
        <begin position="269"/>
        <end position="287"/>
    </location>
</feature>
<feature type="topological domain" description="Periplasmic" evidence="1">
    <location>
        <begin position="288"/>
        <end position="296"/>
    </location>
</feature>